<gene>
    <name evidence="1" type="primary">panB</name>
    <name type="ordered locus">Psyr_0828</name>
</gene>
<comment type="function">
    <text evidence="1">Catalyzes the reversible reaction in which hydroxymethyl group from 5,10-methylenetetrahydrofolate is transferred onto alpha-ketoisovalerate to form ketopantoate.</text>
</comment>
<comment type="catalytic activity">
    <reaction evidence="1">
        <text>3-methyl-2-oxobutanoate + (6R)-5,10-methylene-5,6,7,8-tetrahydrofolate + H2O = 2-dehydropantoate + (6S)-5,6,7,8-tetrahydrofolate</text>
        <dbReference type="Rhea" id="RHEA:11824"/>
        <dbReference type="ChEBI" id="CHEBI:11561"/>
        <dbReference type="ChEBI" id="CHEBI:11851"/>
        <dbReference type="ChEBI" id="CHEBI:15377"/>
        <dbReference type="ChEBI" id="CHEBI:15636"/>
        <dbReference type="ChEBI" id="CHEBI:57453"/>
        <dbReference type="EC" id="2.1.2.11"/>
    </reaction>
</comment>
<comment type="cofactor">
    <cofactor evidence="1">
        <name>Mg(2+)</name>
        <dbReference type="ChEBI" id="CHEBI:18420"/>
    </cofactor>
    <text evidence="1">Binds 1 Mg(2+) ion per subunit.</text>
</comment>
<comment type="pathway">
    <text evidence="1">Cofactor biosynthesis; (R)-pantothenate biosynthesis; (R)-pantoate from 3-methyl-2-oxobutanoate: step 1/2.</text>
</comment>
<comment type="subunit">
    <text evidence="1">Homodecamer; pentamer of dimers.</text>
</comment>
<comment type="subcellular location">
    <subcellularLocation>
        <location evidence="1">Cytoplasm</location>
    </subcellularLocation>
</comment>
<comment type="similarity">
    <text evidence="1">Belongs to the PanB family.</text>
</comment>
<reference key="1">
    <citation type="journal article" date="2005" name="Proc. Natl. Acad. Sci. U.S.A.">
        <title>Comparison of the complete genome sequences of Pseudomonas syringae pv. syringae B728a and pv. tomato DC3000.</title>
        <authorList>
            <person name="Feil H."/>
            <person name="Feil W.S."/>
            <person name="Chain P."/>
            <person name="Larimer F."/>
            <person name="Dibartolo G."/>
            <person name="Copeland A."/>
            <person name="Lykidis A."/>
            <person name="Trong S."/>
            <person name="Nolan M."/>
            <person name="Goltsman E."/>
            <person name="Thiel J."/>
            <person name="Malfatti S."/>
            <person name="Loper J.E."/>
            <person name="Lapidus A."/>
            <person name="Detter J.C."/>
            <person name="Land M."/>
            <person name="Richardson P.M."/>
            <person name="Kyrpides N.C."/>
            <person name="Ivanova N."/>
            <person name="Lindow S.E."/>
        </authorList>
    </citation>
    <scope>NUCLEOTIDE SEQUENCE [LARGE SCALE GENOMIC DNA]</scope>
    <source>
        <strain>B728a</strain>
    </source>
</reference>
<sequence length="266" mass="28041">MPNITVTSLLAMKQKGEKITMLTCYDATFAHTASQAGVEVLLIGDSLGMVLQGHDSTLPVTTAETAYHVACVKRGNQGAMILADLPFMANATLEQTLINSATLMQAGAHMIKVEGAAWLAESIRLLAERGIPVCAHMGLTPQAVNVLGGYKVQGRLETQARQMRADAIALEQAGAAMILLECVPSELAEEITQAVKVPVIGIGAGSATDGQVLVLHDMLGLSITGRVPKFVKNFMTGQPDIQSAIRAYVTAVKDLSFPATEHGFSA</sequence>
<dbReference type="EC" id="2.1.2.11" evidence="1"/>
<dbReference type="EMBL" id="CP000075">
    <property type="protein sequence ID" value="AAY35886.1"/>
    <property type="molecule type" value="Genomic_DNA"/>
</dbReference>
<dbReference type="RefSeq" id="WP_011266658.1">
    <property type="nucleotide sequence ID" value="NC_007005.1"/>
</dbReference>
<dbReference type="RefSeq" id="YP_233924.1">
    <property type="nucleotide sequence ID" value="NC_007005.1"/>
</dbReference>
<dbReference type="SMR" id="Q4ZY86"/>
<dbReference type="STRING" id="205918.Psyr_0828"/>
<dbReference type="KEGG" id="psb:Psyr_0828"/>
<dbReference type="PATRIC" id="fig|205918.7.peg.853"/>
<dbReference type="eggNOG" id="COG0413">
    <property type="taxonomic scope" value="Bacteria"/>
</dbReference>
<dbReference type="HOGENOM" id="CLU_036645_1_0_6"/>
<dbReference type="OrthoDB" id="9781789at2"/>
<dbReference type="UniPathway" id="UPA00028">
    <property type="reaction ID" value="UER00003"/>
</dbReference>
<dbReference type="Proteomes" id="UP000000426">
    <property type="component" value="Chromosome"/>
</dbReference>
<dbReference type="GO" id="GO:0005737">
    <property type="term" value="C:cytoplasm"/>
    <property type="evidence" value="ECO:0007669"/>
    <property type="project" value="UniProtKB-SubCell"/>
</dbReference>
<dbReference type="GO" id="GO:0003864">
    <property type="term" value="F:3-methyl-2-oxobutanoate hydroxymethyltransferase activity"/>
    <property type="evidence" value="ECO:0007669"/>
    <property type="project" value="UniProtKB-UniRule"/>
</dbReference>
<dbReference type="GO" id="GO:0000287">
    <property type="term" value="F:magnesium ion binding"/>
    <property type="evidence" value="ECO:0007669"/>
    <property type="project" value="TreeGrafter"/>
</dbReference>
<dbReference type="GO" id="GO:0015940">
    <property type="term" value="P:pantothenate biosynthetic process"/>
    <property type="evidence" value="ECO:0007669"/>
    <property type="project" value="UniProtKB-UniRule"/>
</dbReference>
<dbReference type="CDD" id="cd06557">
    <property type="entry name" value="KPHMT-like"/>
    <property type="match status" value="1"/>
</dbReference>
<dbReference type="FunFam" id="3.20.20.60:FF:000003">
    <property type="entry name" value="3-methyl-2-oxobutanoate hydroxymethyltransferase"/>
    <property type="match status" value="1"/>
</dbReference>
<dbReference type="Gene3D" id="3.20.20.60">
    <property type="entry name" value="Phosphoenolpyruvate-binding domains"/>
    <property type="match status" value="1"/>
</dbReference>
<dbReference type="HAMAP" id="MF_00156">
    <property type="entry name" value="PanB"/>
    <property type="match status" value="1"/>
</dbReference>
<dbReference type="InterPro" id="IPR003700">
    <property type="entry name" value="Pantoate_hydroxy_MeTrfase"/>
</dbReference>
<dbReference type="InterPro" id="IPR015813">
    <property type="entry name" value="Pyrv/PenolPyrv_kinase-like_dom"/>
</dbReference>
<dbReference type="InterPro" id="IPR040442">
    <property type="entry name" value="Pyrv_kinase-like_dom_sf"/>
</dbReference>
<dbReference type="NCBIfam" id="TIGR00222">
    <property type="entry name" value="panB"/>
    <property type="match status" value="1"/>
</dbReference>
<dbReference type="NCBIfam" id="NF001452">
    <property type="entry name" value="PRK00311.1"/>
    <property type="match status" value="1"/>
</dbReference>
<dbReference type="PANTHER" id="PTHR20881">
    <property type="entry name" value="3-METHYL-2-OXOBUTANOATE HYDROXYMETHYLTRANSFERASE"/>
    <property type="match status" value="1"/>
</dbReference>
<dbReference type="PANTHER" id="PTHR20881:SF0">
    <property type="entry name" value="3-METHYL-2-OXOBUTANOATE HYDROXYMETHYLTRANSFERASE"/>
    <property type="match status" value="1"/>
</dbReference>
<dbReference type="Pfam" id="PF02548">
    <property type="entry name" value="Pantoate_transf"/>
    <property type="match status" value="1"/>
</dbReference>
<dbReference type="PIRSF" id="PIRSF000388">
    <property type="entry name" value="Pantoate_hydroxy_MeTrfase"/>
    <property type="match status" value="1"/>
</dbReference>
<dbReference type="SUPFAM" id="SSF51621">
    <property type="entry name" value="Phosphoenolpyruvate/pyruvate domain"/>
    <property type="match status" value="1"/>
</dbReference>
<protein>
    <recommendedName>
        <fullName evidence="1">3-methyl-2-oxobutanoate hydroxymethyltransferase</fullName>
        <ecNumber evidence="1">2.1.2.11</ecNumber>
    </recommendedName>
    <alternativeName>
        <fullName evidence="1">Ketopantoate hydroxymethyltransferase</fullName>
        <shortName evidence="1">KPHMT</shortName>
    </alternativeName>
</protein>
<evidence type="ECO:0000255" key="1">
    <source>
        <dbReference type="HAMAP-Rule" id="MF_00156"/>
    </source>
</evidence>
<keyword id="KW-0963">Cytoplasm</keyword>
<keyword id="KW-0460">Magnesium</keyword>
<keyword id="KW-0479">Metal-binding</keyword>
<keyword id="KW-0566">Pantothenate biosynthesis</keyword>
<keyword id="KW-0808">Transferase</keyword>
<accession>Q4ZY86</accession>
<feature type="chain" id="PRO_0000297342" description="3-methyl-2-oxobutanoate hydroxymethyltransferase">
    <location>
        <begin position="1"/>
        <end position="266"/>
    </location>
</feature>
<feature type="active site" description="Proton acceptor" evidence="1">
    <location>
        <position position="181"/>
    </location>
</feature>
<feature type="binding site" evidence="1">
    <location>
        <begin position="45"/>
        <end position="46"/>
    </location>
    <ligand>
        <name>3-methyl-2-oxobutanoate</name>
        <dbReference type="ChEBI" id="CHEBI:11851"/>
    </ligand>
</feature>
<feature type="binding site" evidence="1">
    <location>
        <position position="45"/>
    </location>
    <ligand>
        <name>Mg(2+)</name>
        <dbReference type="ChEBI" id="CHEBI:18420"/>
    </ligand>
</feature>
<feature type="binding site" evidence="1">
    <location>
        <position position="84"/>
    </location>
    <ligand>
        <name>3-methyl-2-oxobutanoate</name>
        <dbReference type="ChEBI" id="CHEBI:11851"/>
    </ligand>
</feature>
<feature type="binding site" evidence="1">
    <location>
        <position position="84"/>
    </location>
    <ligand>
        <name>Mg(2+)</name>
        <dbReference type="ChEBI" id="CHEBI:18420"/>
    </ligand>
</feature>
<feature type="binding site" evidence="1">
    <location>
        <position position="112"/>
    </location>
    <ligand>
        <name>3-methyl-2-oxobutanoate</name>
        <dbReference type="ChEBI" id="CHEBI:11851"/>
    </ligand>
</feature>
<feature type="binding site" evidence="1">
    <location>
        <position position="114"/>
    </location>
    <ligand>
        <name>Mg(2+)</name>
        <dbReference type="ChEBI" id="CHEBI:18420"/>
    </ligand>
</feature>
<organism>
    <name type="scientific">Pseudomonas syringae pv. syringae (strain B728a)</name>
    <dbReference type="NCBI Taxonomy" id="205918"/>
    <lineage>
        <taxon>Bacteria</taxon>
        <taxon>Pseudomonadati</taxon>
        <taxon>Pseudomonadota</taxon>
        <taxon>Gammaproteobacteria</taxon>
        <taxon>Pseudomonadales</taxon>
        <taxon>Pseudomonadaceae</taxon>
        <taxon>Pseudomonas</taxon>
        <taxon>Pseudomonas syringae</taxon>
    </lineage>
</organism>
<proteinExistence type="inferred from homology"/>
<name>PANB_PSEU2</name>